<name>DTD_YEAST</name>
<organism>
    <name type="scientific">Saccharomyces cerevisiae (strain ATCC 204508 / S288c)</name>
    <name type="common">Baker's yeast</name>
    <dbReference type="NCBI Taxonomy" id="559292"/>
    <lineage>
        <taxon>Eukaryota</taxon>
        <taxon>Fungi</taxon>
        <taxon>Dikarya</taxon>
        <taxon>Ascomycota</taxon>
        <taxon>Saccharomycotina</taxon>
        <taxon>Saccharomycetes</taxon>
        <taxon>Saccharomycetales</taxon>
        <taxon>Saccharomycetaceae</taxon>
        <taxon>Saccharomyces</taxon>
    </lineage>
</organism>
<dbReference type="EC" id="3.1.1.96" evidence="7"/>
<dbReference type="EMBL" id="Z74267">
    <property type="protein sequence ID" value="CAA98798.1"/>
    <property type="molecule type" value="Genomic_DNA"/>
</dbReference>
<dbReference type="EMBL" id="BK006938">
    <property type="protein sequence ID" value="DAA11645.1"/>
    <property type="molecule type" value="Genomic_DNA"/>
</dbReference>
<dbReference type="PIR" id="S67782">
    <property type="entry name" value="S67782"/>
</dbReference>
<dbReference type="RefSeq" id="NP_010062.1">
    <property type="nucleotide sequence ID" value="NM_001180279.1"/>
</dbReference>
<dbReference type="SMR" id="Q07648"/>
<dbReference type="BioGRID" id="31826">
    <property type="interactions" value="100"/>
</dbReference>
<dbReference type="DIP" id="DIP-5464N"/>
<dbReference type="FunCoup" id="Q07648">
    <property type="interactions" value="1916"/>
</dbReference>
<dbReference type="IntAct" id="Q07648">
    <property type="interactions" value="6"/>
</dbReference>
<dbReference type="STRING" id="4932.YDL219W"/>
<dbReference type="PaxDb" id="4932-YDL219W"/>
<dbReference type="PeptideAtlas" id="Q07648"/>
<dbReference type="EnsemblFungi" id="YDL219W_mRNA">
    <property type="protein sequence ID" value="YDL219W"/>
    <property type="gene ID" value="YDL219W"/>
</dbReference>
<dbReference type="GeneID" id="851307"/>
<dbReference type="KEGG" id="sce:YDL219W"/>
<dbReference type="AGR" id="SGD:S000002378"/>
<dbReference type="SGD" id="S000002378">
    <property type="gene designation" value="DTD1"/>
</dbReference>
<dbReference type="VEuPathDB" id="FungiDB:YDL219W"/>
<dbReference type="eggNOG" id="KOG3323">
    <property type="taxonomic scope" value="Eukaryota"/>
</dbReference>
<dbReference type="GeneTree" id="ENSGT00940000153431"/>
<dbReference type="HOGENOM" id="CLU_076901_0_4_1"/>
<dbReference type="InParanoid" id="Q07648"/>
<dbReference type="OMA" id="VFGADMK"/>
<dbReference type="OrthoDB" id="275783at2759"/>
<dbReference type="BioCyc" id="YEAST:G3O-29600-MONOMER"/>
<dbReference type="BRENDA" id="3.1.1.96">
    <property type="organism ID" value="984"/>
</dbReference>
<dbReference type="BioGRID-ORCS" id="851307">
    <property type="hits" value="0 hits in 10 CRISPR screens"/>
</dbReference>
<dbReference type="PRO" id="PR:Q07648"/>
<dbReference type="Proteomes" id="UP000002311">
    <property type="component" value="Chromosome IV"/>
</dbReference>
<dbReference type="RNAct" id="Q07648">
    <property type="molecule type" value="protein"/>
</dbReference>
<dbReference type="GO" id="GO:0005737">
    <property type="term" value="C:cytoplasm"/>
    <property type="evidence" value="ECO:0007005"/>
    <property type="project" value="SGD"/>
</dbReference>
<dbReference type="GO" id="GO:0097358">
    <property type="term" value="F:D-leucyl-tRNA(Leu) deacylase activity"/>
    <property type="evidence" value="ECO:0000315"/>
    <property type="project" value="SGD"/>
</dbReference>
<dbReference type="GO" id="GO:0051500">
    <property type="term" value="F:D-tyrosyl-tRNA(Tyr) deacylase activity"/>
    <property type="evidence" value="ECO:0000315"/>
    <property type="project" value="SGD"/>
</dbReference>
<dbReference type="GO" id="GO:0000049">
    <property type="term" value="F:tRNA binding"/>
    <property type="evidence" value="ECO:0007669"/>
    <property type="project" value="UniProtKB-KW"/>
</dbReference>
<dbReference type="GO" id="GO:1900832">
    <property type="term" value="P:D-leucine catabolic process"/>
    <property type="evidence" value="ECO:0000315"/>
    <property type="project" value="SGD"/>
</dbReference>
<dbReference type="GO" id="GO:1900829">
    <property type="term" value="P:D-tyrosine catabolic process"/>
    <property type="evidence" value="ECO:0000315"/>
    <property type="project" value="SGD"/>
</dbReference>
<dbReference type="GO" id="GO:0006399">
    <property type="term" value="P:tRNA metabolic process"/>
    <property type="evidence" value="ECO:0000315"/>
    <property type="project" value="SGD"/>
</dbReference>
<dbReference type="CDD" id="cd00563">
    <property type="entry name" value="Dtyr_deacylase"/>
    <property type="match status" value="1"/>
</dbReference>
<dbReference type="FunFam" id="3.50.80.10:FF:000001">
    <property type="entry name" value="D-aminoacyl-tRNA deacylase"/>
    <property type="match status" value="1"/>
</dbReference>
<dbReference type="Gene3D" id="3.50.80.10">
    <property type="entry name" value="D-tyrosyl-tRNA(Tyr) deacylase"/>
    <property type="match status" value="1"/>
</dbReference>
<dbReference type="HAMAP" id="MF_00518">
    <property type="entry name" value="Deacylase_Dtd"/>
    <property type="match status" value="1"/>
</dbReference>
<dbReference type="InterPro" id="IPR003732">
    <property type="entry name" value="Daa-tRNA_deacyls_DTD"/>
</dbReference>
<dbReference type="InterPro" id="IPR023509">
    <property type="entry name" value="DTD-like_sf"/>
</dbReference>
<dbReference type="NCBIfam" id="TIGR00256">
    <property type="entry name" value="D-aminoacyl-tRNA deacylase"/>
    <property type="match status" value="1"/>
</dbReference>
<dbReference type="PANTHER" id="PTHR10472:SF5">
    <property type="entry name" value="D-AMINOACYL-TRNA DEACYLASE 1"/>
    <property type="match status" value="1"/>
</dbReference>
<dbReference type="PANTHER" id="PTHR10472">
    <property type="entry name" value="D-TYROSYL-TRNA TYR DEACYLASE"/>
    <property type="match status" value="1"/>
</dbReference>
<dbReference type="Pfam" id="PF02580">
    <property type="entry name" value="Tyr_Deacylase"/>
    <property type="match status" value="1"/>
</dbReference>
<dbReference type="SUPFAM" id="SSF69500">
    <property type="entry name" value="DTD-like"/>
    <property type="match status" value="1"/>
</dbReference>
<reference key="1">
    <citation type="journal article" date="1997" name="Nature">
        <title>The nucleotide sequence of Saccharomyces cerevisiae chromosome IV.</title>
        <authorList>
            <person name="Jacq C."/>
            <person name="Alt-Moerbe J."/>
            <person name="Andre B."/>
            <person name="Arnold W."/>
            <person name="Bahr A."/>
            <person name="Ballesta J.P.G."/>
            <person name="Bargues M."/>
            <person name="Baron L."/>
            <person name="Becker A."/>
            <person name="Biteau N."/>
            <person name="Bloecker H."/>
            <person name="Blugeon C."/>
            <person name="Boskovic J."/>
            <person name="Brandt P."/>
            <person name="Brueckner M."/>
            <person name="Buitrago M.J."/>
            <person name="Coster F."/>
            <person name="Delaveau T."/>
            <person name="del Rey F."/>
            <person name="Dujon B."/>
            <person name="Eide L.G."/>
            <person name="Garcia-Cantalejo J.M."/>
            <person name="Goffeau A."/>
            <person name="Gomez-Peris A."/>
            <person name="Granotier C."/>
            <person name="Hanemann V."/>
            <person name="Hankeln T."/>
            <person name="Hoheisel J.D."/>
            <person name="Jaeger W."/>
            <person name="Jimenez A."/>
            <person name="Jonniaux J.-L."/>
            <person name="Kraemer C."/>
            <person name="Kuester H."/>
            <person name="Laamanen P."/>
            <person name="Legros Y."/>
            <person name="Louis E.J."/>
            <person name="Moeller-Rieker S."/>
            <person name="Monnet A."/>
            <person name="Moro M."/>
            <person name="Mueller-Auer S."/>
            <person name="Nussbaumer B."/>
            <person name="Paricio N."/>
            <person name="Paulin L."/>
            <person name="Perea J."/>
            <person name="Perez-Alonso M."/>
            <person name="Perez-Ortin J.E."/>
            <person name="Pohl T.M."/>
            <person name="Prydz H."/>
            <person name="Purnelle B."/>
            <person name="Rasmussen S.W."/>
            <person name="Remacha M.A."/>
            <person name="Revuelta J.L."/>
            <person name="Rieger M."/>
            <person name="Salom D."/>
            <person name="Saluz H.P."/>
            <person name="Saiz J.E."/>
            <person name="Saren A.-M."/>
            <person name="Schaefer M."/>
            <person name="Scharfe M."/>
            <person name="Schmidt E.R."/>
            <person name="Schneider C."/>
            <person name="Scholler P."/>
            <person name="Schwarz S."/>
            <person name="Soler-Mira A."/>
            <person name="Urrestarazu L.A."/>
            <person name="Verhasselt P."/>
            <person name="Vissers S."/>
            <person name="Voet M."/>
            <person name="Volckaert G."/>
            <person name="Wagner G."/>
            <person name="Wambutt R."/>
            <person name="Wedler E."/>
            <person name="Wedler H."/>
            <person name="Woelfl S."/>
            <person name="Harris D.E."/>
            <person name="Bowman S."/>
            <person name="Brown D."/>
            <person name="Churcher C.M."/>
            <person name="Connor R."/>
            <person name="Dedman K."/>
            <person name="Gentles S."/>
            <person name="Hamlin N."/>
            <person name="Hunt S."/>
            <person name="Jones L."/>
            <person name="McDonald S."/>
            <person name="Murphy L.D."/>
            <person name="Niblett D."/>
            <person name="Odell C."/>
            <person name="Oliver K."/>
            <person name="Rajandream M.A."/>
            <person name="Richards C."/>
            <person name="Shore L."/>
            <person name="Walsh S.V."/>
            <person name="Barrell B.G."/>
            <person name="Dietrich F.S."/>
            <person name="Mulligan J.T."/>
            <person name="Allen E."/>
            <person name="Araujo R."/>
            <person name="Aviles E."/>
            <person name="Berno A."/>
            <person name="Carpenter J."/>
            <person name="Chen E."/>
            <person name="Cherry J.M."/>
            <person name="Chung E."/>
            <person name="Duncan M."/>
            <person name="Hunicke-Smith S."/>
            <person name="Hyman R.W."/>
            <person name="Komp C."/>
            <person name="Lashkari D."/>
            <person name="Lew H."/>
            <person name="Lin D."/>
            <person name="Mosedale D."/>
            <person name="Nakahara K."/>
            <person name="Namath A."/>
            <person name="Oefner P."/>
            <person name="Oh C."/>
            <person name="Petel F.X."/>
            <person name="Roberts D."/>
            <person name="Schramm S."/>
            <person name="Schroeder M."/>
            <person name="Shogren T."/>
            <person name="Shroff N."/>
            <person name="Winant A."/>
            <person name="Yelton M.A."/>
            <person name="Botstein D."/>
            <person name="Davis R.W."/>
            <person name="Johnston M."/>
            <person name="Andrews S."/>
            <person name="Brinkman R."/>
            <person name="Cooper J."/>
            <person name="Ding H."/>
            <person name="Du Z."/>
            <person name="Favello A."/>
            <person name="Fulton L."/>
            <person name="Gattung S."/>
            <person name="Greco T."/>
            <person name="Hallsworth K."/>
            <person name="Hawkins J."/>
            <person name="Hillier L.W."/>
            <person name="Jier M."/>
            <person name="Johnson D."/>
            <person name="Johnston L."/>
            <person name="Kirsten J."/>
            <person name="Kucaba T."/>
            <person name="Langston Y."/>
            <person name="Latreille P."/>
            <person name="Le T."/>
            <person name="Mardis E."/>
            <person name="Menezes S."/>
            <person name="Miller N."/>
            <person name="Nhan M."/>
            <person name="Pauley A."/>
            <person name="Peluso D."/>
            <person name="Rifkin L."/>
            <person name="Riles L."/>
            <person name="Taich A."/>
            <person name="Trevaskis E."/>
            <person name="Vignati D."/>
            <person name="Wilcox L."/>
            <person name="Wohldman P."/>
            <person name="Vaudin M."/>
            <person name="Wilson R."/>
            <person name="Waterston R."/>
            <person name="Albermann K."/>
            <person name="Hani J."/>
            <person name="Heumann K."/>
            <person name="Kleine K."/>
            <person name="Mewes H.-W."/>
            <person name="Zollner A."/>
            <person name="Zaccaria P."/>
        </authorList>
    </citation>
    <scope>NUCLEOTIDE SEQUENCE [LARGE SCALE GENOMIC DNA]</scope>
    <source>
        <strain>ATCC 204508 / S288c</strain>
    </source>
</reference>
<reference key="2">
    <citation type="journal article" date="2014" name="G3 (Bethesda)">
        <title>The reference genome sequence of Saccharomyces cerevisiae: Then and now.</title>
        <authorList>
            <person name="Engel S.R."/>
            <person name="Dietrich F.S."/>
            <person name="Fisk D.G."/>
            <person name="Binkley G."/>
            <person name="Balakrishnan R."/>
            <person name="Costanzo M.C."/>
            <person name="Dwight S.S."/>
            <person name="Hitz B.C."/>
            <person name="Karra K."/>
            <person name="Nash R.S."/>
            <person name="Weng S."/>
            <person name="Wong E.D."/>
            <person name="Lloyd P."/>
            <person name="Skrzypek M.S."/>
            <person name="Miyasato S.R."/>
            <person name="Simison M."/>
            <person name="Cherry J.M."/>
        </authorList>
    </citation>
    <scope>GENOME REANNOTATION</scope>
    <source>
        <strain>ATCC 204508 / S288c</strain>
    </source>
</reference>
<reference key="3">
    <citation type="journal article" date="2000" name="J. Biol. Chem.">
        <title>D-tyrosyl-tRNA(Tyr) metabolism in Saccharomyces cerevisiae.</title>
        <authorList>
            <person name="Soutourina J."/>
            <person name="Blanquet S."/>
            <person name="Plateau P."/>
        </authorList>
    </citation>
    <scope>FUNCTION</scope>
    <scope>CATALYTIC ACTIVITY</scope>
    <scope>SUBCELLULAR LOCATION</scope>
    <scope>DISRUPTION PHENOTYPE</scope>
    <source>
        <strain>DBY2057</strain>
    </source>
</reference>
<reference key="4">
    <citation type="journal article" date="2000" name="J. Biol. Chem.">
        <title>Metabolism of D-aminoacyl-tRNAs in Escherichia coli and Saccharomyces cerevisiae cells.</title>
        <authorList>
            <person name="Soutourina J."/>
            <person name="Plateau P."/>
            <person name="Blanquet S."/>
        </authorList>
    </citation>
    <scope>FUNCTION</scope>
    <scope>DISRUPTION PHENOTYPE</scope>
    <source>
        <strain>DBY2057</strain>
    </source>
</reference>
<reference key="5">
    <citation type="journal article" date="2003" name="Nature">
        <title>Global analysis of protein expression in yeast.</title>
        <authorList>
            <person name="Ghaemmaghami S."/>
            <person name="Huh W.-K."/>
            <person name="Bower K."/>
            <person name="Howson R.W."/>
            <person name="Belle A."/>
            <person name="Dephoure N."/>
            <person name="O'Shea E.K."/>
            <person name="Weissman J.S."/>
        </authorList>
    </citation>
    <scope>LEVEL OF PROTEIN EXPRESSION [LARGE SCALE ANALYSIS]</scope>
</reference>
<protein>
    <recommendedName>
        <fullName evidence="1">D-aminoacyl-tRNA deacylase</fullName>
        <shortName evidence="6">DTD</shortName>
        <ecNumber evidence="7">3.1.1.96</ecNumber>
    </recommendedName>
    <alternativeName>
        <fullName evidence="5">D-tyrosyl-tRNA(Tyr) deacylase</fullName>
    </alternativeName>
    <alternativeName>
        <fullName evidence="1">Gly-tRNA(Ala) deacylase</fullName>
    </alternativeName>
</protein>
<comment type="function">
    <text evidence="1 2 8">An aminoacyl-tRNA editing enzyme that deacylates mischarged D-aminoacyl-tRNAs (Probable). Hydrolyzes D-tyrosyl-tRNA(Tyr) into D-tyrosine and free tRNA(Tyr) (PubMed:10766779). May also deacylate mischarged D-leucyl-tRNA(Leu) (PubMed:10918062). Also deacylates mischarged glycyl-tRNA(Ala), protecting cells against glycine mischarging by AlaRS (By similarity). Acts via tRNA-based rather than protein-based catalysis; rejects L-amino acids rather than detecting D-amino acids in the active site (By similarity). By recycling D-aminoacyl-tRNA to D-amino acids and free tRNA molecules, this enzyme counteracts the toxicity associated with the formation of D-aminoacyl-tRNA entities in vivo and helps enforce protein L-homochirality (By similarity).</text>
</comment>
<comment type="catalytic activity">
    <reaction evidence="1">
        <text>glycyl-tRNA(Ala) + H2O = tRNA(Ala) + glycine + H(+)</text>
        <dbReference type="Rhea" id="RHEA:53744"/>
        <dbReference type="Rhea" id="RHEA-COMP:9657"/>
        <dbReference type="Rhea" id="RHEA-COMP:13640"/>
        <dbReference type="ChEBI" id="CHEBI:15377"/>
        <dbReference type="ChEBI" id="CHEBI:15378"/>
        <dbReference type="ChEBI" id="CHEBI:57305"/>
        <dbReference type="ChEBI" id="CHEBI:78442"/>
        <dbReference type="ChEBI" id="CHEBI:78522"/>
        <dbReference type="EC" id="3.1.1.96"/>
    </reaction>
</comment>
<comment type="catalytic activity">
    <reaction evidence="7">
        <text>a D-aminoacyl-tRNA + H2O = a tRNA + a D-alpha-amino acid + H(+)</text>
        <dbReference type="Rhea" id="RHEA:13953"/>
        <dbReference type="Rhea" id="RHEA-COMP:10123"/>
        <dbReference type="Rhea" id="RHEA-COMP:10124"/>
        <dbReference type="ChEBI" id="CHEBI:15377"/>
        <dbReference type="ChEBI" id="CHEBI:15378"/>
        <dbReference type="ChEBI" id="CHEBI:59871"/>
        <dbReference type="ChEBI" id="CHEBI:78442"/>
        <dbReference type="ChEBI" id="CHEBI:79333"/>
        <dbReference type="EC" id="3.1.1.96"/>
    </reaction>
</comment>
<comment type="catalytic activity">
    <reaction evidence="2">
        <text>D-tyrosyl-tRNA(Tyr) + H2O = D-tyrosine + tRNA(Tyr)</text>
        <dbReference type="Rhea" id="RHEA:25347"/>
        <dbReference type="Rhea" id="RHEA-COMP:9707"/>
        <dbReference type="Rhea" id="RHEA-COMP:9872"/>
        <dbReference type="ChEBI" id="CHEBI:15377"/>
        <dbReference type="ChEBI" id="CHEBI:58570"/>
        <dbReference type="ChEBI" id="CHEBI:78442"/>
        <dbReference type="ChEBI" id="CHEBI:78723"/>
    </reaction>
</comment>
<comment type="subunit">
    <text evidence="1">Homodimer.</text>
</comment>
<comment type="subcellular location">
    <subcellularLocation>
        <location evidence="7">Cytoplasm</location>
    </subcellularLocation>
</comment>
<comment type="domain">
    <text evidence="1">A Gly-cisPro motif from one monomer fits into the active site of the other monomer to allow specific chiral rejection of L-amino acids.</text>
</comment>
<comment type="disruption phenotype">
    <text evidence="2 3">10-fold decrease in D-tyrosyl-tRNA(Tyr) deacylase activity, growth becomes more sensitive to D-tyrosine and is inhibited at 0.1 mM D-Tyr (PubMed:10766779, PubMed:10918062). Growth is also inhibited in the presence of 0.3 mM D-leucine; wild-type cells grow well in up to 0.3 mM D-Tyr and 10 mM D-Leu (PubMed:10918062). No growth differences observed in the presence of the other D-amino acids (PubMed:10918062).</text>
</comment>
<comment type="miscellaneous">
    <text evidence="4">Present with 4610 molecules/cell in log phase SD medium.</text>
</comment>
<comment type="similarity">
    <text evidence="6">Belongs to the DTD family.</text>
</comment>
<sequence length="150" mass="16746">MKIVLQKVSQASVVVDSKVISSIKHGYMLLVGISIDDSMAEIDKLSKKVLSLRIFEDESRNLWKKNIKEANGEILSVSQFTLMAKTKKGTKPDFHLAQKGHIAKELYEEFLKLLRSDLGEEKVKDGEFGAMMSCSLTNEGPVTIILDSDQ</sequence>
<keyword id="KW-0963">Cytoplasm</keyword>
<keyword id="KW-0378">Hydrolase</keyword>
<keyword id="KW-1185">Reference proteome</keyword>
<keyword id="KW-0694">RNA-binding</keyword>
<keyword id="KW-0820">tRNA-binding</keyword>
<evidence type="ECO:0000250" key="1">
    <source>
        <dbReference type="UniProtKB" id="Q8IIS0"/>
    </source>
</evidence>
<evidence type="ECO:0000269" key="2">
    <source>
    </source>
</evidence>
<evidence type="ECO:0000269" key="3">
    <source>
    </source>
</evidence>
<evidence type="ECO:0000269" key="4">
    <source>
    </source>
</evidence>
<evidence type="ECO:0000303" key="5">
    <source>
    </source>
</evidence>
<evidence type="ECO:0000305" key="6"/>
<evidence type="ECO:0000305" key="7">
    <source>
    </source>
</evidence>
<evidence type="ECO:0000305" key="8">
    <source>
    </source>
</evidence>
<accession>Q07648</accession>
<accession>D6VRD5</accession>
<proteinExistence type="evidence at protein level"/>
<feature type="chain" id="PRO_0000164634" description="D-aminoacyl-tRNA deacylase">
    <location>
        <begin position="1"/>
        <end position="150"/>
    </location>
</feature>
<feature type="short sequence motif" description="Gly-cisPro motif, important for rejection of L-amino acids" evidence="1">
    <location>
        <begin position="140"/>
        <end position="141"/>
    </location>
</feature>
<gene>
    <name evidence="5" type="primary">DTD1</name>
    <name type="ordered locus">YDL219W</name>
</gene>